<gene>
    <name evidence="1" type="primary">kdsB</name>
    <name type="ordered locus">YPTS_1527</name>
</gene>
<dbReference type="EC" id="2.7.7.38" evidence="1"/>
<dbReference type="EMBL" id="CP001048">
    <property type="protein sequence ID" value="ACC88499.1"/>
    <property type="molecule type" value="Genomic_DNA"/>
</dbReference>
<dbReference type="RefSeq" id="WP_002211314.1">
    <property type="nucleotide sequence ID" value="NZ_CP009780.1"/>
</dbReference>
<dbReference type="SMR" id="B2KA34"/>
<dbReference type="GeneID" id="57977196"/>
<dbReference type="KEGG" id="ypb:YPTS_1527"/>
<dbReference type="PATRIC" id="fig|502801.10.peg.893"/>
<dbReference type="UniPathway" id="UPA00030"/>
<dbReference type="UniPathway" id="UPA00358">
    <property type="reaction ID" value="UER00476"/>
</dbReference>
<dbReference type="GO" id="GO:0005829">
    <property type="term" value="C:cytosol"/>
    <property type="evidence" value="ECO:0007669"/>
    <property type="project" value="TreeGrafter"/>
</dbReference>
<dbReference type="GO" id="GO:0008690">
    <property type="term" value="F:3-deoxy-manno-octulosonate cytidylyltransferase activity"/>
    <property type="evidence" value="ECO:0007669"/>
    <property type="project" value="UniProtKB-UniRule"/>
</dbReference>
<dbReference type="GO" id="GO:0033468">
    <property type="term" value="P:CMP-keto-3-deoxy-D-manno-octulosonic acid biosynthetic process"/>
    <property type="evidence" value="ECO:0007669"/>
    <property type="project" value="UniProtKB-UniRule"/>
</dbReference>
<dbReference type="GO" id="GO:0009103">
    <property type="term" value="P:lipopolysaccharide biosynthetic process"/>
    <property type="evidence" value="ECO:0007669"/>
    <property type="project" value="UniProtKB-UniRule"/>
</dbReference>
<dbReference type="CDD" id="cd02517">
    <property type="entry name" value="CMP-KDO-Synthetase"/>
    <property type="match status" value="1"/>
</dbReference>
<dbReference type="FunFam" id="3.90.550.10:FF:000011">
    <property type="entry name" value="3-deoxy-manno-octulosonate cytidylyltransferase"/>
    <property type="match status" value="1"/>
</dbReference>
<dbReference type="Gene3D" id="3.90.550.10">
    <property type="entry name" value="Spore Coat Polysaccharide Biosynthesis Protein SpsA, Chain A"/>
    <property type="match status" value="1"/>
</dbReference>
<dbReference type="HAMAP" id="MF_00057">
    <property type="entry name" value="KdsB"/>
    <property type="match status" value="1"/>
</dbReference>
<dbReference type="InterPro" id="IPR003329">
    <property type="entry name" value="Cytidylyl_trans"/>
</dbReference>
<dbReference type="InterPro" id="IPR004528">
    <property type="entry name" value="KdsB"/>
</dbReference>
<dbReference type="InterPro" id="IPR029044">
    <property type="entry name" value="Nucleotide-diphossugar_trans"/>
</dbReference>
<dbReference type="NCBIfam" id="TIGR00466">
    <property type="entry name" value="kdsB"/>
    <property type="match status" value="1"/>
</dbReference>
<dbReference type="NCBIfam" id="NF003950">
    <property type="entry name" value="PRK05450.1-3"/>
    <property type="match status" value="1"/>
</dbReference>
<dbReference type="NCBIfam" id="NF003952">
    <property type="entry name" value="PRK05450.1-5"/>
    <property type="match status" value="1"/>
</dbReference>
<dbReference type="NCBIfam" id="NF009905">
    <property type="entry name" value="PRK13368.1"/>
    <property type="match status" value="1"/>
</dbReference>
<dbReference type="PANTHER" id="PTHR42866">
    <property type="entry name" value="3-DEOXY-MANNO-OCTULOSONATE CYTIDYLYLTRANSFERASE"/>
    <property type="match status" value="1"/>
</dbReference>
<dbReference type="PANTHER" id="PTHR42866:SF2">
    <property type="entry name" value="3-DEOXY-MANNO-OCTULOSONATE CYTIDYLYLTRANSFERASE, MITOCHONDRIAL"/>
    <property type="match status" value="1"/>
</dbReference>
<dbReference type="Pfam" id="PF02348">
    <property type="entry name" value="CTP_transf_3"/>
    <property type="match status" value="1"/>
</dbReference>
<dbReference type="SUPFAM" id="SSF53448">
    <property type="entry name" value="Nucleotide-diphospho-sugar transferases"/>
    <property type="match status" value="1"/>
</dbReference>
<evidence type="ECO:0000255" key="1">
    <source>
        <dbReference type="HAMAP-Rule" id="MF_00057"/>
    </source>
</evidence>
<proteinExistence type="inferred from homology"/>
<protein>
    <recommendedName>
        <fullName evidence="1">3-deoxy-manno-octulosonate cytidylyltransferase</fullName>
        <ecNumber evidence="1">2.7.7.38</ecNumber>
    </recommendedName>
    <alternativeName>
        <fullName evidence="1">CMP-2-keto-3-deoxyoctulosonic acid synthase</fullName>
        <shortName evidence="1">CKS</shortName>
        <shortName evidence="1">CMP-KDO synthase</shortName>
    </alternativeName>
</protein>
<keyword id="KW-0963">Cytoplasm</keyword>
<keyword id="KW-0448">Lipopolysaccharide biosynthesis</keyword>
<keyword id="KW-0548">Nucleotidyltransferase</keyword>
<keyword id="KW-0808">Transferase</keyword>
<sequence>MSFIAIIPARYASTRLPGKPLADIAGKPMVVHVMERALASGADRVIVATDHPDVVKAVEAAGGEVCLTRADHQSGTERLAEVIEHYGFADDDIIVNVQGDEPLVPPVIIRQVADNLAACSAGMATLAVPIASSEEAFNPNAVKVVMDAQGYALYFSRATIPWERERFAQSKETIGDCFLRHIGIYAYRAGFIRRYVNWAPSQLEQIELLEQLRVLWYGEKIHVAVAKAVPAVGVDTQSDLDRVRAIMLNQ</sequence>
<comment type="function">
    <text evidence="1">Activates KDO (a required 8-carbon sugar) for incorporation into bacterial lipopolysaccharide in Gram-negative bacteria.</text>
</comment>
<comment type="catalytic activity">
    <reaction evidence="1">
        <text>3-deoxy-alpha-D-manno-oct-2-ulosonate + CTP = CMP-3-deoxy-beta-D-manno-octulosonate + diphosphate</text>
        <dbReference type="Rhea" id="RHEA:23448"/>
        <dbReference type="ChEBI" id="CHEBI:33019"/>
        <dbReference type="ChEBI" id="CHEBI:37563"/>
        <dbReference type="ChEBI" id="CHEBI:85986"/>
        <dbReference type="ChEBI" id="CHEBI:85987"/>
        <dbReference type="EC" id="2.7.7.38"/>
    </reaction>
</comment>
<comment type="pathway">
    <text evidence="1">Nucleotide-sugar biosynthesis; CMP-3-deoxy-D-manno-octulosonate biosynthesis; CMP-3-deoxy-D-manno-octulosonate from 3-deoxy-D-manno-octulosonate and CTP: step 1/1.</text>
</comment>
<comment type="pathway">
    <text evidence="1">Bacterial outer membrane biogenesis; lipopolysaccharide biosynthesis.</text>
</comment>
<comment type="subcellular location">
    <subcellularLocation>
        <location evidence="1">Cytoplasm</location>
    </subcellularLocation>
</comment>
<comment type="similarity">
    <text evidence="1">Belongs to the KdsB family.</text>
</comment>
<reference key="1">
    <citation type="submission" date="2008-04" db="EMBL/GenBank/DDBJ databases">
        <title>Complete sequence of Yersinia pseudotuberculosis PB1/+.</title>
        <authorList>
            <person name="Copeland A."/>
            <person name="Lucas S."/>
            <person name="Lapidus A."/>
            <person name="Glavina del Rio T."/>
            <person name="Dalin E."/>
            <person name="Tice H."/>
            <person name="Bruce D."/>
            <person name="Goodwin L."/>
            <person name="Pitluck S."/>
            <person name="Munk A.C."/>
            <person name="Brettin T."/>
            <person name="Detter J.C."/>
            <person name="Han C."/>
            <person name="Tapia R."/>
            <person name="Schmutz J."/>
            <person name="Larimer F."/>
            <person name="Land M."/>
            <person name="Hauser L."/>
            <person name="Challacombe J.F."/>
            <person name="Green L."/>
            <person name="Lindler L.E."/>
            <person name="Nikolich M.P."/>
            <person name="Richardson P."/>
        </authorList>
    </citation>
    <scope>NUCLEOTIDE SEQUENCE [LARGE SCALE GENOMIC DNA]</scope>
    <source>
        <strain>PB1/+</strain>
    </source>
</reference>
<organism>
    <name type="scientific">Yersinia pseudotuberculosis serotype IB (strain PB1/+)</name>
    <dbReference type="NCBI Taxonomy" id="502801"/>
    <lineage>
        <taxon>Bacteria</taxon>
        <taxon>Pseudomonadati</taxon>
        <taxon>Pseudomonadota</taxon>
        <taxon>Gammaproteobacteria</taxon>
        <taxon>Enterobacterales</taxon>
        <taxon>Yersiniaceae</taxon>
        <taxon>Yersinia</taxon>
    </lineage>
</organism>
<accession>B2KA34</accession>
<name>KDSB_YERPB</name>
<feature type="chain" id="PRO_1000091915" description="3-deoxy-manno-octulosonate cytidylyltransferase">
    <location>
        <begin position="1"/>
        <end position="250"/>
    </location>
</feature>